<accession>B3CRA9</accession>
<comment type="function">
    <text evidence="1">The RuvA-RuvB-RuvC complex processes Holliday junction (HJ) DNA during genetic recombination and DNA repair, while the RuvA-RuvB complex plays an important role in the rescue of blocked DNA replication forks via replication fork reversal (RFR). RuvA specifically binds to HJ cruciform DNA, conferring on it an open structure. The RuvB hexamer acts as an ATP-dependent pump, pulling dsDNA into and through the RuvAB complex. HJ branch migration allows RuvC to scan DNA until it finds its consensus sequence, where it cleaves and resolves the cruciform DNA.</text>
</comment>
<comment type="subunit">
    <text evidence="1">Homotetramer. Forms an RuvA(8)-RuvB(12)-Holliday junction (HJ) complex. HJ DNA is sandwiched between 2 RuvA tetramers; dsDNA enters through RuvA and exits via RuvB. An RuvB hexamer assembles on each DNA strand where it exits the tetramer. Each RuvB hexamer is contacted by two RuvA subunits (via domain III) on 2 adjacent RuvB subunits; this complex drives branch migration. In the full resolvosome a probable DNA-RuvA(4)-RuvB(12)-RuvC(2) complex forms which resolves the HJ.</text>
</comment>
<comment type="subcellular location">
    <subcellularLocation>
        <location evidence="1">Cytoplasm</location>
    </subcellularLocation>
</comment>
<comment type="domain">
    <text evidence="1">Has three domains with a flexible linker between the domains II and III and assumes an 'L' shape. Domain III is highly mobile and contacts RuvB.</text>
</comment>
<comment type="similarity">
    <text evidence="1">Belongs to the RuvA family.</text>
</comment>
<organism>
    <name type="scientific">Orientia tsutsugamushi (strain Ikeda)</name>
    <name type="common">Rickettsia tsutsugamushi</name>
    <dbReference type="NCBI Taxonomy" id="334380"/>
    <lineage>
        <taxon>Bacteria</taxon>
        <taxon>Pseudomonadati</taxon>
        <taxon>Pseudomonadota</taxon>
        <taxon>Alphaproteobacteria</taxon>
        <taxon>Rickettsiales</taxon>
        <taxon>Rickettsiaceae</taxon>
        <taxon>Rickettsieae</taxon>
        <taxon>Orientia</taxon>
    </lineage>
</organism>
<proteinExistence type="inferred from homology"/>
<keyword id="KW-0963">Cytoplasm</keyword>
<keyword id="KW-0227">DNA damage</keyword>
<keyword id="KW-0233">DNA recombination</keyword>
<keyword id="KW-0234">DNA repair</keyword>
<keyword id="KW-0238">DNA-binding</keyword>
<feature type="chain" id="PRO_1000090347" description="Holliday junction branch migration complex subunit RuvA">
    <location>
        <begin position="1"/>
        <end position="205"/>
    </location>
</feature>
<feature type="region of interest" description="Domain I" evidence="1">
    <location>
        <begin position="1"/>
        <end position="65"/>
    </location>
</feature>
<feature type="region of interest" description="Domain II" evidence="1">
    <location>
        <begin position="66"/>
        <end position="144"/>
    </location>
</feature>
<feature type="region of interest" description="Flexible linker" evidence="1">
    <location>
        <begin position="145"/>
        <end position="153"/>
    </location>
</feature>
<feature type="region of interest" description="Domain III" evidence="1">
    <location>
        <begin position="154"/>
        <end position="205"/>
    </location>
</feature>
<name>RUVA_ORITI</name>
<evidence type="ECO:0000255" key="1">
    <source>
        <dbReference type="HAMAP-Rule" id="MF_00031"/>
    </source>
</evidence>
<dbReference type="EMBL" id="AP008981">
    <property type="protein sequence ID" value="BAG40093.1"/>
    <property type="molecule type" value="Genomic_DNA"/>
</dbReference>
<dbReference type="RefSeq" id="WP_012461280.1">
    <property type="nucleotide sequence ID" value="NC_010793.1"/>
</dbReference>
<dbReference type="SMR" id="B3CRA9"/>
<dbReference type="KEGG" id="ott:OTT_0635"/>
<dbReference type="HOGENOM" id="CLU_087936_3_0_5"/>
<dbReference type="OrthoDB" id="5293449at2"/>
<dbReference type="Proteomes" id="UP000001033">
    <property type="component" value="Chromosome"/>
</dbReference>
<dbReference type="GO" id="GO:0005737">
    <property type="term" value="C:cytoplasm"/>
    <property type="evidence" value="ECO:0007669"/>
    <property type="project" value="UniProtKB-SubCell"/>
</dbReference>
<dbReference type="GO" id="GO:0009379">
    <property type="term" value="C:Holliday junction helicase complex"/>
    <property type="evidence" value="ECO:0007669"/>
    <property type="project" value="InterPro"/>
</dbReference>
<dbReference type="GO" id="GO:0048476">
    <property type="term" value="C:Holliday junction resolvase complex"/>
    <property type="evidence" value="ECO:0007669"/>
    <property type="project" value="UniProtKB-UniRule"/>
</dbReference>
<dbReference type="GO" id="GO:0005524">
    <property type="term" value="F:ATP binding"/>
    <property type="evidence" value="ECO:0007669"/>
    <property type="project" value="InterPro"/>
</dbReference>
<dbReference type="GO" id="GO:0000400">
    <property type="term" value="F:four-way junction DNA binding"/>
    <property type="evidence" value="ECO:0007669"/>
    <property type="project" value="UniProtKB-UniRule"/>
</dbReference>
<dbReference type="GO" id="GO:0009378">
    <property type="term" value="F:four-way junction helicase activity"/>
    <property type="evidence" value="ECO:0007669"/>
    <property type="project" value="InterPro"/>
</dbReference>
<dbReference type="GO" id="GO:0006310">
    <property type="term" value="P:DNA recombination"/>
    <property type="evidence" value="ECO:0007669"/>
    <property type="project" value="UniProtKB-UniRule"/>
</dbReference>
<dbReference type="GO" id="GO:0006281">
    <property type="term" value="P:DNA repair"/>
    <property type="evidence" value="ECO:0007669"/>
    <property type="project" value="UniProtKB-UniRule"/>
</dbReference>
<dbReference type="CDD" id="cd14332">
    <property type="entry name" value="UBA_RuvA_C"/>
    <property type="match status" value="1"/>
</dbReference>
<dbReference type="Gene3D" id="1.10.150.20">
    <property type="entry name" value="5' to 3' exonuclease, C-terminal subdomain"/>
    <property type="match status" value="1"/>
</dbReference>
<dbReference type="Gene3D" id="1.10.8.10">
    <property type="entry name" value="DNA helicase RuvA subunit, C-terminal domain"/>
    <property type="match status" value="1"/>
</dbReference>
<dbReference type="Gene3D" id="2.40.50.140">
    <property type="entry name" value="Nucleic acid-binding proteins"/>
    <property type="match status" value="1"/>
</dbReference>
<dbReference type="HAMAP" id="MF_00031">
    <property type="entry name" value="DNA_HJ_migration_RuvA"/>
    <property type="match status" value="1"/>
</dbReference>
<dbReference type="InterPro" id="IPR013849">
    <property type="entry name" value="DNA_helicase_Holl-junc_RuvA_I"/>
</dbReference>
<dbReference type="InterPro" id="IPR003583">
    <property type="entry name" value="Hlx-hairpin-Hlx_DNA-bd_motif"/>
</dbReference>
<dbReference type="InterPro" id="IPR012340">
    <property type="entry name" value="NA-bd_OB-fold"/>
</dbReference>
<dbReference type="InterPro" id="IPR000085">
    <property type="entry name" value="RuvA"/>
</dbReference>
<dbReference type="InterPro" id="IPR010994">
    <property type="entry name" value="RuvA_2-like"/>
</dbReference>
<dbReference type="InterPro" id="IPR011114">
    <property type="entry name" value="RuvA_C"/>
</dbReference>
<dbReference type="InterPro" id="IPR036267">
    <property type="entry name" value="RuvA_C_sf"/>
</dbReference>
<dbReference type="NCBIfam" id="TIGR00084">
    <property type="entry name" value="ruvA"/>
    <property type="match status" value="1"/>
</dbReference>
<dbReference type="Pfam" id="PF14520">
    <property type="entry name" value="HHH_5"/>
    <property type="match status" value="1"/>
</dbReference>
<dbReference type="Pfam" id="PF07499">
    <property type="entry name" value="RuvA_C"/>
    <property type="match status" value="1"/>
</dbReference>
<dbReference type="Pfam" id="PF01330">
    <property type="entry name" value="RuvA_N"/>
    <property type="match status" value="1"/>
</dbReference>
<dbReference type="SMART" id="SM00278">
    <property type="entry name" value="HhH1"/>
    <property type="match status" value="2"/>
</dbReference>
<dbReference type="SUPFAM" id="SSF46929">
    <property type="entry name" value="DNA helicase RuvA subunit, C-terminal domain"/>
    <property type="match status" value="1"/>
</dbReference>
<dbReference type="SUPFAM" id="SSF50249">
    <property type="entry name" value="Nucleic acid-binding proteins"/>
    <property type="match status" value="1"/>
</dbReference>
<dbReference type="SUPFAM" id="SSF47781">
    <property type="entry name" value="RuvA domain 2-like"/>
    <property type="match status" value="1"/>
</dbReference>
<gene>
    <name evidence="1" type="primary">ruvA</name>
    <name type="ordered locus">OTT_0635</name>
</gene>
<protein>
    <recommendedName>
        <fullName evidence="1">Holliday junction branch migration complex subunit RuvA</fullName>
    </recommendedName>
</protein>
<reference key="1">
    <citation type="journal article" date="2008" name="DNA Res.">
        <title>The whole-genome sequencing of the obligate intracellular bacterium Orientia tsutsugamushi revealed massive gene amplification during reductive genome evolution.</title>
        <authorList>
            <person name="Nakayama K."/>
            <person name="Yamashita A."/>
            <person name="Kurokawa K."/>
            <person name="Morimoto T."/>
            <person name="Ogawa M."/>
            <person name="Fukuhara M."/>
            <person name="Urakami H."/>
            <person name="Ohnishi M."/>
            <person name="Uchiyama I."/>
            <person name="Ogura Y."/>
            <person name="Ooka T."/>
            <person name="Oshima K."/>
            <person name="Tamura A."/>
            <person name="Hattori M."/>
            <person name="Hayashi T."/>
        </authorList>
    </citation>
    <scope>NUCLEOTIDE SEQUENCE [LARGE SCALE GENOMIC DNA]</scope>
    <source>
        <strain>Ikeda</strain>
    </source>
</reference>
<sequence>MIAKLKGILDSITDSYLIIDINGVGYQVYSSGKTLMKLIKEEGSIVSLFIETHVREDRIHLFGFLDNTEKVAFNMLQSVSGIGTKMALHILSNLTPHQLQIAISSQNRHQLKAISGVGPKLIDRLMIELRDKVANINTIANNTSLATLSTDSNTHDNILSDAITALIALGISRAEATQILSDIYALSPSISVNELVRTALQRRAK</sequence>